<name>PUR5_CLOB6</name>
<reference key="1">
    <citation type="submission" date="2008-05" db="EMBL/GenBank/DDBJ databases">
        <title>Genome sequence of Clostridium botulinum Ba4 strain 657.</title>
        <authorList>
            <person name="Shrivastava S."/>
            <person name="Brown J.L."/>
            <person name="Bruce D."/>
            <person name="Detter C."/>
            <person name="Munk C."/>
            <person name="Smith L.A."/>
            <person name="Smith T.J."/>
            <person name="Sutton G."/>
            <person name="Brettin T.S."/>
        </authorList>
    </citation>
    <scope>NUCLEOTIDE SEQUENCE [LARGE SCALE GENOMIC DNA]</scope>
    <source>
        <strain>657 / Type Ba4</strain>
    </source>
</reference>
<comment type="catalytic activity">
    <reaction evidence="1">
        <text>2-formamido-N(1)-(5-O-phospho-beta-D-ribosyl)acetamidine + ATP = 5-amino-1-(5-phospho-beta-D-ribosyl)imidazole + ADP + phosphate + H(+)</text>
        <dbReference type="Rhea" id="RHEA:23032"/>
        <dbReference type="ChEBI" id="CHEBI:15378"/>
        <dbReference type="ChEBI" id="CHEBI:30616"/>
        <dbReference type="ChEBI" id="CHEBI:43474"/>
        <dbReference type="ChEBI" id="CHEBI:137981"/>
        <dbReference type="ChEBI" id="CHEBI:147287"/>
        <dbReference type="ChEBI" id="CHEBI:456216"/>
        <dbReference type="EC" id="6.3.3.1"/>
    </reaction>
</comment>
<comment type="pathway">
    <text evidence="1">Purine metabolism; IMP biosynthesis via de novo pathway; 5-amino-1-(5-phospho-D-ribosyl)imidazole from N(2)-formyl-N(1)-(5-phospho-D-ribosyl)glycinamide: step 2/2.</text>
</comment>
<comment type="subcellular location">
    <subcellularLocation>
        <location evidence="1">Cytoplasm</location>
    </subcellularLocation>
</comment>
<comment type="similarity">
    <text evidence="1">Belongs to the AIR synthase family.</text>
</comment>
<proteinExistence type="inferred from homology"/>
<sequence>MVSYKEAGVNIEEGYKSVDLIKKHASKTFTKGVLNNLGSFAGMFELPKYKNPVLVSGTDGVGTKLDIAFRMKKYNTVGIDCVAMCVNDILCHGAKPLFFLDYIACGKLEAEVAAQLVEGVSNGCIQSECALIGGETAEMPGFYRDGEYDIAGFAVGVAEKDEIIDGSKIEDGDVLIGIASSGPHSNGYSLIRKIVEDLHKDFAGDKIGNTLLTPTKIYVKPVMKLLEKYNIKGMAHVTGGGFYENIPRMFKEDFTAVINKKSYPVPNIFNHLMNLGVEEDHMYNTFNMGIGFVLCVNEKDGENIIKDLIEMGEKGYKIGYVKKGDKSVELI</sequence>
<evidence type="ECO:0000255" key="1">
    <source>
        <dbReference type="HAMAP-Rule" id="MF_00741"/>
    </source>
</evidence>
<organism>
    <name type="scientific">Clostridium botulinum (strain 657 / Type Ba4)</name>
    <dbReference type="NCBI Taxonomy" id="515621"/>
    <lineage>
        <taxon>Bacteria</taxon>
        <taxon>Bacillati</taxon>
        <taxon>Bacillota</taxon>
        <taxon>Clostridia</taxon>
        <taxon>Eubacteriales</taxon>
        <taxon>Clostridiaceae</taxon>
        <taxon>Clostridium</taxon>
    </lineage>
</organism>
<feature type="chain" id="PRO_1000212817" description="Phosphoribosylformylglycinamidine cyclo-ligase">
    <location>
        <begin position="1"/>
        <end position="331"/>
    </location>
</feature>
<protein>
    <recommendedName>
        <fullName evidence="1">Phosphoribosylformylglycinamidine cyclo-ligase</fullName>
        <ecNumber evidence="1">6.3.3.1</ecNumber>
    </recommendedName>
    <alternativeName>
        <fullName evidence="1">AIR synthase</fullName>
    </alternativeName>
    <alternativeName>
        <fullName evidence="1">AIRS</fullName>
    </alternativeName>
    <alternativeName>
        <fullName evidence="1">Phosphoribosyl-aminoimidazole synthetase</fullName>
    </alternativeName>
</protein>
<gene>
    <name evidence="1" type="primary">purM</name>
    <name type="ordered locus">CLJ_B3130</name>
</gene>
<keyword id="KW-0067">ATP-binding</keyword>
<keyword id="KW-0963">Cytoplasm</keyword>
<keyword id="KW-0436">Ligase</keyword>
<keyword id="KW-0547">Nucleotide-binding</keyword>
<keyword id="KW-0658">Purine biosynthesis</keyword>
<accession>C3L2V1</accession>
<dbReference type="EC" id="6.3.3.1" evidence="1"/>
<dbReference type="EMBL" id="CP001083">
    <property type="protein sequence ID" value="ACQ51729.1"/>
    <property type="molecule type" value="Genomic_DNA"/>
</dbReference>
<dbReference type="RefSeq" id="WP_003359901.1">
    <property type="nucleotide sequence ID" value="NC_012658.1"/>
</dbReference>
<dbReference type="SMR" id="C3L2V1"/>
<dbReference type="KEGG" id="cbi:CLJ_B3130"/>
<dbReference type="HOGENOM" id="CLU_047116_0_0_9"/>
<dbReference type="UniPathway" id="UPA00074">
    <property type="reaction ID" value="UER00129"/>
</dbReference>
<dbReference type="Proteomes" id="UP000002333">
    <property type="component" value="Chromosome"/>
</dbReference>
<dbReference type="GO" id="GO:0005829">
    <property type="term" value="C:cytosol"/>
    <property type="evidence" value="ECO:0007669"/>
    <property type="project" value="TreeGrafter"/>
</dbReference>
<dbReference type="GO" id="GO:0005524">
    <property type="term" value="F:ATP binding"/>
    <property type="evidence" value="ECO:0007669"/>
    <property type="project" value="UniProtKB-KW"/>
</dbReference>
<dbReference type="GO" id="GO:0004637">
    <property type="term" value="F:phosphoribosylamine-glycine ligase activity"/>
    <property type="evidence" value="ECO:0007669"/>
    <property type="project" value="TreeGrafter"/>
</dbReference>
<dbReference type="GO" id="GO:0004641">
    <property type="term" value="F:phosphoribosylformylglycinamidine cyclo-ligase activity"/>
    <property type="evidence" value="ECO:0007669"/>
    <property type="project" value="UniProtKB-UniRule"/>
</dbReference>
<dbReference type="GO" id="GO:0006189">
    <property type="term" value="P:'de novo' IMP biosynthetic process"/>
    <property type="evidence" value="ECO:0007669"/>
    <property type="project" value="UniProtKB-UniRule"/>
</dbReference>
<dbReference type="GO" id="GO:0046084">
    <property type="term" value="P:adenine biosynthetic process"/>
    <property type="evidence" value="ECO:0007669"/>
    <property type="project" value="TreeGrafter"/>
</dbReference>
<dbReference type="CDD" id="cd02196">
    <property type="entry name" value="PurM"/>
    <property type="match status" value="1"/>
</dbReference>
<dbReference type="FunFam" id="3.30.1330.10:FF:000001">
    <property type="entry name" value="Phosphoribosylformylglycinamidine cyclo-ligase"/>
    <property type="match status" value="1"/>
</dbReference>
<dbReference type="FunFam" id="3.90.650.10:FF:000011">
    <property type="entry name" value="Phosphoribosylformylglycinamidine cyclo-ligase"/>
    <property type="match status" value="1"/>
</dbReference>
<dbReference type="Gene3D" id="3.90.650.10">
    <property type="entry name" value="PurM-like C-terminal domain"/>
    <property type="match status" value="1"/>
</dbReference>
<dbReference type="Gene3D" id="3.30.1330.10">
    <property type="entry name" value="PurM-like, N-terminal domain"/>
    <property type="match status" value="1"/>
</dbReference>
<dbReference type="HAMAP" id="MF_00741">
    <property type="entry name" value="AIRS"/>
    <property type="match status" value="1"/>
</dbReference>
<dbReference type="InterPro" id="IPR010918">
    <property type="entry name" value="PurM-like_C_dom"/>
</dbReference>
<dbReference type="InterPro" id="IPR036676">
    <property type="entry name" value="PurM-like_C_sf"/>
</dbReference>
<dbReference type="InterPro" id="IPR016188">
    <property type="entry name" value="PurM-like_N"/>
</dbReference>
<dbReference type="InterPro" id="IPR036921">
    <property type="entry name" value="PurM-like_N_sf"/>
</dbReference>
<dbReference type="InterPro" id="IPR004733">
    <property type="entry name" value="PurM_cligase"/>
</dbReference>
<dbReference type="NCBIfam" id="TIGR00878">
    <property type="entry name" value="purM"/>
    <property type="match status" value="1"/>
</dbReference>
<dbReference type="PANTHER" id="PTHR10520:SF12">
    <property type="entry name" value="TRIFUNCTIONAL PURINE BIOSYNTHETIC PROTEIN ADENOSINE-3"/>
    <property type="match status" value="1"/>
</dbReference>
<dbReference type="PANTHER" id="PTHR10520">
    <property type="entry name" value="TRIFUNCTIONAL PURINE BIOSYNTHETIC PROTEIN ADENOSINE-3-RELATED"/>
    <property type="match status" value="1"/>
</dbReference>
<dbReference type="Pfam" id="PF00586">
    <property type="entry name" value="AIRS"/>
    <property type="match status" value="1"/>
</dbReference>
<dbReference type="Pfam" id="PF02769">
    <property type="entry name" value="AIRS_C"/>
    <property type="match status" value="1"/>
</dbReference>
<dbReference type="SUPFAM" id="SSF56042">
    <property type="entry name" value="PurM C-terminal domain-like"/>
    <property type="match status" value="1"/>
</dbReference>
<dbReference type="SUPFAM" id="SSF55326">
    <property type="entry name" value="PurM N-terminal domain-like"/>
    <property type="match status" value="1"/>
</dbReference>